<accession>P11213</accession>
<name>L_RABVP</name>
<sequence>MLDPGEVYDDPIDPIELEAEPRGTPTVPNILRNSDYNLNSPLIEDPARLMLEWLKTGNRPYRMTLTDNCSRSFRVLKDYFKKVDLGSLKVGGMAAQSMISLWLYGAHSESNRSRRCITDLAHFYSKSSPIEKLLNLTLGNRGLRIPPEGVLSCLERVDYDNAFGRYLANTYSSYLFFHVITLYMNALDWDEEKTILALWKDLTSVDIGKDLVKFKDQIWGLLIVTKDFVYSQSSNCLFDRNYTLMLKDLFLSRFNSLMVLLSPPEPRYSDDLISQLCQLYIAGDQVLSMCGNSGYEVIKILEPYVVNSLVQRAEKFRPLIHSLGDFPVFIKDKVSQLEETFGSCARRFFRALDQFDNIHDLVFVYGCYRHWGHPYIDYRKGLSKLYDQVHIKKVIDKSYQECLASDLARRILRWGFDKYSKWYLDSRFLARDHPLTPYIKTQTWPPKHIVDLVGDTWHKLPITQIFEIPESMDPSEILDDKSHSFTRTRLASWLSENRGGPVPSEKVIITALSKPPVNPREFLKSIDLGGLPDEDLIIGLKPKERELKIEGRFFALMSWNLRLYFVITEKLLANYILPLFDALTMTDNLNKVFKKLIDRVTGQGLLDYSRVTYAFHLDYEKWNNHQRLESTEDVFSVLDQVFGLKRVFSRTHEFFQKSWIYYSDRSDLIGLREDQIYCLDASNGPTCWNGQDGGLEGLRQKGWSLVSLLMIDRESQIRNTRTKVLAQGDNQVLCPTYMLSPGLSQEGLLYELESISRNAFSIYRAVEEGASKLGLIIKKEETMCSYDFLIYGKTPLFRGNILVPESKRWARVSCVSNDQIVNLANIMSTVSTNALTVAQHSQSLIKPMRDFLLMSVQAVFHYLLFSPILKGRVYKILSAEGESFLLAMSRIIYLDPSLGGVSGMSLGRFHIRQFSDPVSEGLSFWREIWLSSHESWIHALCQEAGNPDLGERTLESFTRLLEDPTTLNIRGGASPTILLKDAIRKALYDEVDKVENSEFREAILLSKTHRDNFILFLTSVEPLFPRFLSELFSSSFLGIPESIIGLIQNSRTIRRQFRKSLSKTLEESFYNSEIHGISRMTQTPQRVGGVWPCSSERADLLREISWGRKVVGTTVPHPSEMLGLLPKSSISCTCGATGGGNPRVSVSVLPSFDQSFFCTGPLKGYLGSSTSMSTQLFHAWEKVTNVHVVKRALSLKESINWFITRDSNLAQTLIRNIVSLTGPDFPLEEAPVFKRTGSALHRFKSARYSEGGYSSVCPNLLSHISVSTDTMSDLTQDGKNYDFMFQPLMLYAQTWTSELVQRDTRLRDSTFHWHLQCNRCVRPIDDVTLETSQIFEFPDVSKRISRMVSGAVPHFQRLPDIRLRPGDFESLSGREKSHHIGSAQGLLYSILVAIHDSGYNDGTIFPVNIYGKVSPRDYLRGLARGVLIGSSICFLTRMTNININRPLELISGVISYILLRLDNHPSLYIMLREPSFREEIFSIPQKIPAAYPTTMKEGNRSILCYLQHVLRYEREVITASPENDWLWIFSDFRSAKMTYLTLITYQSHLLLQRVERNLSKSMRDNLRQLSSLMRQVLGGHGEDTLESDDNIQRLLKDSLRRTRWVDQEVRHAARTMTGDYSPNKKVSRKVGCSEWVCSAQQVAVSTSANPAPVSELDIRALSKRFQNPLISGLRVVQWATGAHYKLKPILDDLNVFPSLCLVVGDGSGGISRAVLNMFPDAKLVFNSLLEVNDLMASGTHPLPPSAIMRGGNDIVSRVIDFDSIWEKPSDLRNLATWKYFQSVQKQVNMSYDLIICDAEVTDIASINRITLLMSDFALSIDGPLYLVFKTYGTMLVNPNYKAIQHLSRAFPSVTGFITQVTSSFSSELYLRFSKRGKFFRDAEYLTSSTLREMSLVLFNCSSPKSEMQRARSLNYQDLVRGFPEEIISNPYNEMIITLIDSDVESFLVHKMVDDLELQRGTLSKVAIIIAIMIVFSNRVFNVSKPLTDPLFYPPSDPKILRHFNICCSTMMYLSTALGDVPSFARLHDLYNRPITYYFRKQVILGNVYLSWSWSNDTSVFKRVACNSSLSLSSHWIRLIYKIVKTTRLVGSIKDLSGEVERHLHRYNRWITLENIRSRSSLLDYSCLCIGYSWKPAHAKTLV</sequence>
<protein>
    <recommendedName>
        <fullName>Large structural protein</fullName>
        <shortName>Protein L</shortName>
    </recommendedName>
    <alternativeName>
        <fullName>Replicase</fullName>
    </alternativeName>
    <alternativeName>
        <fullName>Transcriptase</fullName>
    </alternativeName>
    <domain>
        <recommendedName>
            <fullName>RNA-directed RNA polymerase</fullName>
            <ecNumber evidence="3">2.7.7.48</ecNumber>
        </recommendedName>
    </domain>
    <domain>
        <recommendedName>
            <fullName evidence="2">GTP phosphohydrolase</fullName>
            <ecNumber evidence="2">3.6.1.-</ecNumber>
        </recommendedName>
    </domain>
    <domain>
        <recommendedName>
            <fullName evidence="8">GDP polyribonucleotidyltransferase</fullName>
            <ecNumber evidence="2">2.7.7.88</ecNumber>
        </recommendedName>
        <alternativeName>
            <fullName evidence="8">PRNTase</fullName>
        </alternativeName>
    </domain>
    <domain>
        <recommendedName>
            <fullName evidence="8">mRNA cap methyltransferase</fullName>
            <ecNumber evidence="2">2.1.1.375</ecNumber>
        </recommendedName>
        <alternativeName>
            <fullName evidence="2">mRNA (guanine-N(7)-)-methyltransferase</fullName>
            <shortName evidence="2">G-N7-MTase</shortName>
        </alternativeName>
        <alternativeName>
            <fullName evidence="2">mRNA (nucleoside-2'-O-)-methyltransferase</fullName>
            <shortName evidence="2">N1-2'-O-MTase</shortName>
        </alternativeName>
    </domain>
</protein>
<evidence type="ECO:0000250" key="1"/>
<evidence type="ECO:0000250" key="2">
    <source>
        <dbReference type="UniProtKB" id="P03523"/>
    </source>
</evidence>
<evidence type="ECO:0000250" key="3">
    <source>
        <dbReference type="UniProtKB" id="P28887"/>
    </source>
</evidence>
<evidence type="ECO:0000255" key="4"/>
<evidence type="ECO:0000255" key="5">
    <source>
        <dbReference type="PROSITE-ProRule" id="PRU00539"/>
    </source>
</evidence>
<evidence type="ECO:0000255" key="6">
    <source>
        <dbReference type="PROSITE-ProRule" id="PRU00923"/>
    </source>
</evidence>
<evidence type="ECO:0000256" key="7">
    <source>
        <dbReference type="SAM" id="MobiDB-lite"/>
    </source>
</evidence>
<evidence type="ECO:0000305" key="8"/>
<comment type="function">
    <text evidence="2">RNA-directed RNA polymerase that catalyzes the transcription of viral mRNAs, their capping and polyadenylation. The template is composed of the viral RNA tightly encapsidated by the nucleoprotein (N). The viral polymerase binds to the genomic RNA at the 3' leader promoter, and transcribes subsequently all viral mRNAs with a decreasing efficiency. The first gene is the most transcribed, and the last the least transcribed. The viral phosphoprotein acts as a processivity factor. Capping is concomitant with initiation of mRNA transcription. Indeed, a GDP polyribonucleotidyl transferase (PRNTase) adds the cap structure when the nascent RNA chain length has reached few nucleotides. Ribose 2'-O methylation of viral mRNA cap precedes and facilitates subsequent guanine-N-7 methylation, both activities being carried by the viral polymerase. Polyadenylation of mRNAs occur by a stuttering mechanism at a slipery stop site present at the end viral genes. After finishing transcription of a mRNA, the polymerase can resume transcription of the downstream gene.</text>
</comment>
<comment type="function">
    <text evidence="2">RNA-directed RNA polymerase that catalyzes the replication of viral genomic RNA. The template is composed of the viral RNA tightly encapsidated by the nucleoprotein (N). The replicase mode is dependent on intracellular N protein concentration. In this mode, the polymerase replicates the whole viral genome without recognizing transcriptional signals, and the replicated genome is not caped or polyadenylated.</text>
</comment>
<comment type="catalytic activity">
    <reaction evidence="5">
        <text>RNA(n) + a ribonucleoside 5'-triphosphate = RNA(n+1) + diphosphate</text>
        <dbReference type="Rhea" id="RHEA:21248"/>
        <dbReference type="Rhea" id="RHEA-COMP:14527"/>
        <dbReference type="Rhea" id="RHEA-COMP:17342"/>
        <dbReference type="ChEBI" id="CHEBI:33019"/>
        <dbReference type="ChEBI" id="CHEBI:61557"/>
        <dbReference type="ChEBI" id="CHEBI:140395"/>
        <dbReference type="EC" id="2.7.7.48"/>
    </reaction>
</comment>
<comment type="catalytic activity">
    <reaction evidence="2">
        <text>a 5'-end (5'-triphosphoguanosine)-adenylyl-adenylyl-cytidylyl-adenosine in mRNA + 2 S-adenosyl-L-methionine = a 5'-end (N(7)-methyl 5'-triphosphoguanosine)-(2'-O-methyladenylyl)-adenylyl-cytidylyl-adenosine in mRNA + 2 S-adenosyl-L-homocysteine + H(+)</text>
        <dbReference type="Rhea" id="RHEA:65376"/>
        <dbReference type="Rhea" id="RHEA-COMP:16797"/>
        <dbReference type="Rhea" id="RHEA-COMP:16798"/>
        <dbReference type="ChEBI" id="CHEBI:15378"/>
        <dbReference type="ChEBI" id="CHEBI:57856"/>
        <dbReference type="ChEBI" id="CHEBI:59789"/>
        <dbReference type="ChEBI" id="CHEBI:156483"/>
        <dbReference type="ChEBI" id="CHEBI:156484"/>
        <dbReference type="EC" id="2.1.1.375"/>
    </reaction>
</comment>
<comment type="catalytic activity">
    <reaction evidence="2">
        <text>a 5'-end (5'-triphosphoguanosine)-adenylyl-adenylyl-cytidylyl-adenosine in mRNA + S-adenosyl-L-methionine = a 5'-end (5'-triphosphoguanosine)-(2'-O-methyladenylyl)-adenylyl-cytidylyl-adenosine in mRNA + S-adenosyl-L-homocysteine + H(+)</text>
        <dbReference type="Rhea" id="RHEA:65380"/>
        <dbReference type="Rhea" id="RHEA-COMP:16797"/>
        <dbReference type="Rhea" id="RHEA-COMP:16801"/>
        <dbReference type="ChEBI" id="CHEBI:15378"/>
        <dbReference type="ChEBI" id="CHEBI:57856"/>
        <dbReference type="ChEBI" id="CHEBI:59789"/>
        <dbReference type="ChEBI" id="CHEBI:156482"/>
        <dbReference type="ChEBI" id="CHEBI:156484"/>
    </reaction>
</comment>
<comment type="catalytic activity">
    <reaction evidence="3">
        <text>a 5'-end triphospho-adenylyl-adenylyl-cytidylyl-adenosine in mRNA + GDP + H(+) = a 5'-end (5'-triphosphoguanosine)-adenylyl-adenylyl-cytidylyl-adenosine in mRNA + diphosphate</text>
        <dbReference type="Rhea" id="RHEA:65436"/>
        <dbReference type="Rhea" id="RHEA-COMP:16797"/>
        <dbReference type="Rhea" id="RHEA-COMP:16799"/>
        <dbReference type="ChEBI" id="CHEBI:15378"/>
        <dbReference type="ChEBI" id="CHEBI:33019"/>
        <dbReference type="ChEBI" id="CHEBI:58189"/>
        <dbReference type="ChEBI" id="CHEBI:156484"/>
        <dbReference type="ChEBI" id="CHEBI:156503"/>
        <dbReference type="EC" id="2.7.7.88"/>
    </reaction>
</comment>
<comment type="catalytic activity">
    <reaction evidence="2">
        <text>a 5'-end (5'-triphosphoguanosine)-(2'-O-methyladenylyl)-adenylyl-cytidylyl-adenosine in mRNA + S-adenosyl-L-methionine = a 5'-end (N(7)-methyl 5'-triphosphoguanosine)-(2'-O-methyladenylyl)-adenylyl-cytidylyl-adenosine in mRNA + S-adenosyl-L-homocysteine</text>
        <dbReference type="Rhea" id="RHEA:65440"/>
        <dbReference type="Rhea" id="RHEA-COMP:16798"/>
        <dbReference type="Rhea" id="RHEA-COMP:16801"/>
        <dbReference type="ChEBI" id="CHEBI:57856"/>
        <dbReference type="ChEBI" id="CHEBI:59789"/>
        <dbReference type="ChEBI" id="CHEBI:156482"/>
        <dbReference type="ChEBI" id="CHEBI:156483"/>
    </reaction>
</comment>
<comment type="catalytic activity">
    <reaction evidence="3">
        <text>GTP + H2O = GDP + phosphate + H(+)</text>
        <dbReference type="Rhea" id="RHEA:19669"/>
        <dbReference type="ChEBI" id="CHEBI:15377"/>
        <dbReference type="ChEBI" id="CHEBI:15378"/>
        <dbReference type="ChEBI" id="CHEBI:37565"/>
        <dbReference type="ChEBI" id="CHEBI:43474"/>
        <dbReference type="ChEBI" id="CHEBI:58189"/>
    </reaction>
</comment>
<comment type="subunit">
    <text evidence="2">May form homodimer. Interacts with the P protein.</text>
</comment>
<comment type="subcellular location">
    <subcellularLocation>
        <location evidence="2">Virion</location>
    </subcellularLocation>
    <subcellularLocation>
        <location evidence="2">Host cytoplasm</location>
    </subcellularLocation>
    <text evidence="2">L and P are packaged asymmetrically towards the blunt end of the virus.</text>
</comment>
<comment type="similarity">
    <text evidence="8">Belongs to the rhabdoviruses protein L family.</text>
</comment>
<organism>
    <name type="scientific">Rabies virus (strain Pasteur vaccins / PV)</name>
    <name type="common">RABV</name>
    <dbReference type="NCBI Taxonomy" id="103929"/>
    <lineage>
        <taxon>Viruses</taxon>
        <taxon>Riboviria</taxon>
        <taxon>Orthornavirae</taxon>
        <taxon>Negarnaviricota</taxon>
        <taxon>Haploviricotina</taxon>
        <taxon>Monjiviricetes</taxon>
        <taxon>Mononegavirales</taxon>
        <taxon>Rhabdoviridae</taxon>
        <taxon>Alpharhabdovirinae</taxon>
        <taxon>Lyssavirus</taxon>
        <taxon>Lyssavirus rabies</taxon>
    </lineage>
</organism>
<keyword id="KW-0067">ATP-binding</keyword>
<keyword id="KW-1035">Host cytoplasm</keyword>
<keyword id="KW-0378">Hydrolase</keyword>
<keyword id="KW-0489">Methyltransferase</keyword>
<keyword id="KW-0506">mRNA capping</keyword>
<keyword id="KW-0507">mRNA processing</keyword>
<keyword id="KW-0511">Multifunctional enzyme</keyword>
<keyword id="KW-0547">Nucleotide-binding</keyword>
<keyword id="KW-0548">Nucleotidyltransferase</keyword>
<keyword id="KW-1185">Reference proteome</keyword>
<keyword id="KW-0696">RNA-directed RNA polymerase</keyword>
<keyword id="KW-0949">S-adenosyl-L-methionine</keyword>
<keyword id="KW-0808">Transferase</keyword>
<keyword id="KW-0693">Viral RNA replication</keyword>
<keyword id="KW-0946">Virion</keyword>
<reference key="1">
    <citation type="journal article" date="1988" name="Virology">
        <title>Completion of the rabies virus genome sequence determination: highly conserved domains among the L (polymerase) proteins of unsegmented negative-strand RNA viruses.</title>
        <authorList>
            <person name="Tordo N."/>
            <person name="Poch O."/>
            <person name="Ermine A."/>
            <person name="Keith G."/>
            <person name="Rougeon F."/>
        </authorList>
    </citation>
    <scope>NUCLEOTIDE SEQUENCE [GENOMIC RNA]</scope>
</reference>
<reference key="2">
    <citation type="journal article" date="1986" name="Proc. Natl. Acad. Sci. U.S.A.">
        <title>Walking along the rabies genome: is the large G-L intergenic region a remnant gene?</title>
        <authorList>
            <person name="Tordo N."/>
            <person name="Poch O."/>
            <person name="Ermine A."/>
            <person name="Keith G."/>
            <person name="Rougeon F."/>
        </authorList>
    </citation>
    <scope>NUCLEOTIDE SEQUENCE [GENOMIC RNA] OF 1-28</scope>
</reference>
<organismHost>
    <name type="scientific">Homo sapiens</name>
    <name type="common">Human</name>
    <dbReference type="NCBI Taxonomy" id="9606"/>
</organismHost>
<organismHost>
    <name type="scientific">Mammalia</name>
    <dbReference type="NCBI Taxonomy" id="40674"/>
</organismHost>
<dbReference type="EC" id="2.7.7.48" evidence="3"/>
<dbReference type="EC" id="3.6.1.-" evidence="2"/>
<dbReference type="EC" id="2.7.7.88" evidence="2"/>
<dbReference type="EC" id="2.1.1.375" evidence="2"/>
<dbReference type="EMBL" id="M13215">
    <property type="protein sequence ID" value="AAA47219.1"/>
    <property type="molecule type" value="Genomic_RNA"/>
</dbReference>
<dbReference type="PIR" id="A29248">
    <property type="entry name" value="ZLVNPV"/>
</dbReference>
<dbReference type="RefSeq" id="NP_056797.1">
    <property type="nucleotide sequence ID" value="NC_001542.1"/>
</dbReference>
<dbReference type="SMR" id="P11213"/>
<dbReference type="DrugBank" id="DB11603">
    <property type="generic name" value="Rabies immune globulin, human"/>
</dbReference>
<dbReference type="KEGG" id="vg:1489857"/>
<dbReference type="BRENDA" id="2.7.7.88">
    <property type="organism ID" value="14818"/>
</dbReference>
<dbReference type="Proteomes" id="UP000008649">
    <property type="component" value="Segment"/>
</dbReference>
<dbReference type="GO" id="GO:0030430">
    <property type="term" value="C:host cell cytoplasm"/>
    <property type="evidence" value="ECO:0007669"/>
    <property type="project" value="UniProtKB-SubCell"/>
</dbReference>
<dbReference type="GO" id="GO:0044423">
    <property type="term" value="C:virion component"/>
    <property type="evidence" value="ECO:0007669"/>
    <property type="project" value="UniProtKB-KW"/>
</dbReference>
<dbReference type="GO" id="GO:0005524">
    <property type="term" value="F:ATP binding"/>
    <property type="evidence" value="ECO:0007669"/>
    <property type="project" value="UniProtKB-KW"/>
</dbReference>
<dbReference type="GO" id="GO:0003924">
    <property type="term" value="F:GTPase activity"/>
    <property type="evidence" value="ECO:0007669"/>
    <property type="project" value="RHEA"/>
</dbReference>
<dbReference type="GO" id="GO:0004482">
    <property type="term" value="F:mRNA 5'-cap (guanine-N7-)-methyltransferase activity"/>
    <property type="evidence" value="ECO:0007669"/>
    <property type="project" value="InterPro"/>
</dbReference>
<dbReference type="GO" id="GO:0003968">
    <property type="term" value="F:RNA-directed RNA polymerase activity"/>
    <property type="evidence" value="ECO:0007669"/>
    <property type="project" value="UniProtKB-KW"/>
</dbReference>
<dbReference type="GO" id="GO:0039689">
    <property type="term" value="P:negative stranded viral RNA replication"/>
    <property type="evidence" value="ECO:0000314"/>
    <property type="project" value="UniProtKB"/>
</dbReference>
<dbReference type="InterPro" id="IPR039530">
    <property type="entry name" value="L_methyltransferase_rhabdo"/>
</dbReference>
<dbReference type="InterPro" id="IPR039736">
    <property type="entry name" value="L_poly_C"/>
</dbReference>
<dbReference type="InterPro" id="IPR048398">
    <property type="entry name" value="Methyltrans_Mon_C"/>
</dbReference>
<dbReference type="InterPro" id="IPR048397">
    <property type="entry name" value="Methyltrans_Mon_CD"/>
</dbReference>
<dbReference type="InterPro" id="IPR026890">
    <property type="entry name" value="Mononeg_mRNAcap"/>
</dbReference>
<dbReference type="InterPro" id="IPR014023">
    <property type="entry name" value="Mononeg_RNA_pol_cat"/>
</dbReference>
<dbReference type="InterPro" id="IPR025786">
    <property type="entry name" value="Mononega_L_MeTrfase"/>
</dbReference>
<dbReference type="InterPro" id="IPR017234">
    <property type="entry name" value="RNA-dir_pol_rhabdovirus"/>
</dbReference>
<dbReference type="NCBIfam" id="TIGR04198">
    <property type="entry name" value="paramyx_RNAcap"/>
    <property type="match status" value="1"/>
</dbReference>
<dbReference type="Pfam" id="PF21080">
    <property type="entry name" value="Methyltrans_Mon_1st"/>
    <property type="match status" value="1"/>
</dbReference>
<dbReference type="Pfam" id="PF14314">
    <property type="entry name" value="Methyltrans_Mon_2nd"/>
    <property type="match status" value="1"/>
</dbReference>
<dbReference type="Pfam" id="PF21081">
    <property type="entry name" value="Methyltrans_Mon_3rd"/>
    <property type="match status" value="1"/>
</dbReference>
<dbReference type="Pfam" id="PF14318">
    <property type="entry name" value="Mononeg_mRNAcap"/>
    <property type="match status" value="1"/>
</dbReference>
<dbReference type="Pfam" id="PF00946">
    <property type="entry name" value="Mononeg_RNA_pol"/>
    <property type="match status" value="1"/>
</dbReference>
<dbReference type="PIRSF" id="PIRSF037546">
    <property type="entry name" value="RNA_pol_RhabdoV_sub"/>
    <property type="match status" value="1"/>
</dbReference>
<dbReference type="PROSITE" id="PS50526">
    <property type="entry name" value="RDRP_SSRNA_NEG_NONSEG"/>
    <property type="match status" value="1"/>
</dbReference>
<dbReference type="PROSITE" id="PS51590">
    <property type="entry name" value="SAM_MT_MNV_L"/>
    <property type="match status" value="1"/>
</dbReference>
<gene>
    <name type="primary">L</name>
</gene>
<proteinExistence type="inferred from homology"/>
<feature type="chain" id="PRO_0000222840" description="Large structural protein">
    <location>
        <begin position="1"/>
        <end position="2142"/>
    </location>
</feature>
<feature type="domain" description="RdRp catalytic" evidence="5">
    <location>
        <begin position="611"/>
        <end position="799"/>
    </location>
</feature>
<feature type="domain" description="Mononegavirus-type SAM-dependent 2'-O-MTase" evidence="6">
    <location>
        <begin position="1674"/>
        <end position="1871"/>
    </location>
</feature>
<feature type="region of interest" description="Disordered" evidence="7">
    <location>
        <begin position="1"/>
        <end position="24"/>
    </location>
</feature>
<feature type="region of interest" description="Interaction with P protein" evidence="1">
    <location>
        <begin position="1562"/>
        <end position="2127"/>
    </location>
</feature>
<feature type="compositionally biased region" description="Acidic residues" evidence="7">
    <location>
        <begin position="1"/>
        <end position="18"/>
    </location>
</feature>
<feature type="binding site" evidence="4">
    <location>
        <begin position="1701"/>
        <end position="1710"/>
    </location>
    <ligand>
        <name>ATP</name>
        <dbReference type="ChEBI" id="CHEBI:30616"/>
    </ligand>
</feature>